<evidence type="ECO:0000255" key="1">
    <source>
        <dbReference type="HAMAP-Rule" id="MF_00373"/>
    </source>
</evidence>
<evidence type="ECO:0000305" key="2"/>
<reference key="1">
    <citation type="journal article" date="2003" name="Proc. Natl. Acad. Sci. U.S.A.">
        <title>The complete genome sequence of the carcinogenic bacterium Helicobacter hepaticus.</title>
        <authorList>
            <person name="Suerbaum S."/>
            <person name="Josenhans C."/>
            <person name="Sterzenbach T."/>
            <person name="Drescher B."/>
            <person name="Brandt P."/>
            <person name="Bell M."/>
            <person name="Droege M."/>
            <person name="Fartmann B."/>
            <person name="Fischer H.-P."/>
            <person name="Ge Z."/>
            <person name="Hoerster A."/>
            <person name="Holland R."/>
            <person name="Klein K."/>
            <person name="Koenig J."/>
            <person name="Macko L."/>
            <person name="Mendz G.L."/>
            <person name="Nyakatura G."/>
            <person name="Schauer D.B."/>
            <person name="Shen Z."/>
            <person name="Weber J."/>
            <person name="Frosch M."/>
            <person name="Fox J.G."/>
        </authorList>
    </citation>
    <scope>NUCLEOTIDE SEQUENCE [LARGE SCALE GENOMIC DNA]</scope>
    <source>
        <strain>ATCC 51449 / 3B1</strain>
    </source>
</reference>
<dbReference type="EMBL" id="AE017125">
    <property type="protein sequence ID" value="AAP77886.1"/>
    <property type="molecule type" value="Genomic_DNA"/>
</dbReference>
<dbReference type="RefSeq" id="WP_011116129.1">
    <property type="nucleotide sequence ID" value="NC_004917.1"/>
</dbReference>
<dbReference type="SMR" id="Q7VGN1"/>
<dbReference type="STRING" id="235279.HH_1289"/>
<dbReference type="KEGG" id="hhe:HH_1289"/>
<dbReference type="eggNOG" id="COG0227">
    <property type="taxonomic scope" value="Bacteria"/>
</dbReference>
<dbReference type="HOGENOM" id="CLU_064548_7_2_7"/>
<dbReference type="OrthoDB" id="9805609at2"/>
<dbReference type="Proteomes" id="UP000002495">
    <property type="component" value="Chromosome"/>
</dbReference>
<dbReference type="GO" id="GO:1990904">
    <property type="term" value="C:ribonucleoprotein complex"/>
    <property type="evidence" value="ECO:0007669"/>
    <property type="project" value="UniProtKB-KW"/>
</dbReference>
<dbReference type="GO" id="GO:0005840">
    <property type="term" value="C:ribosome"/>
    <property type="evidence" value="ECO:0007669"/>
    <property type="project" value="UniProtKB-KW"/>
</dbReference>
<dbReference type="GO" id="GO:0003735">
    <property type="term" value="F:structural constituent of ribosome"/>
    <property type="evidence" value="ECO:0007669"/>
    <property type="project" value="InterPro"/>
</dbReference>
<dbReference type="GO" id="GO:0006412">
    <property type="term" value="P:translation"/>
    <property type="evidence" value="ECO:0007669"/>
    <property type="project" value="UniProtKB-UniRule"/>
</dbReference>
<dbReference type="Gene3D" id="2.30.170.40">
    <property type="entry name" value="Ribosomal protein L28/L24"/>
    <property type="match status" value="1"/>
</dbReference>
<dbReference type="HAMAP" id="MF_00373">
    <property type="entry name" value="Ribosomal_bL28"/>
    <property type="match status" value="1"/>
</dbReference>
<dbReference type="InterPro" id="IPR050096">
    <property type="entry name" value="Bacterial_rp_bL28"/>
</dbReference>
<dbReference type="InterPro" id="IPR026569">
    <property type="entry name" value="Ribosomal_bL28"/>
</dbReference>
<dbReference type="InterPro" id="IPR034704">
    <property type="entry name" value="Ribosomal_bL28/bL31-like_sf"/>
</dbReference>
<dbReference type="InterPro" id="IPR001383">
    <property type="entry name" value="Ribosomal_bL28_bact-type"/>
</dbReference>
<dbReference type="InterPro" id="IPR037147">
    <property type="entry name" value="Ribosomal_bL28_sf"/>
</dbReference>
<dbReference type="NCBIfam" id="TIGR00009">
    <property type="entry name" value="L28"/>
    <property type="match status" value="1"/>
</dbReference>
<dbReference type="PANTHER" id="PTHR39080">
    <property type="entry name" value="50S RIBOSOMAL PROTEIN L28"/>
    <property type="match status" value="1"/>
</dbReference>
<dbReference type="PANTHER" id="PTHR39080:SF1">
    <property type="entry name" value="LARGE RIBOSOMAL SUBUNIT PROTEIN BL28A"/>
    <property type="match status" value="1"/>
</dbReference>
<dbReference type="Pfam" id="PF00830">
    <property type="entry name" value="Ribosomal_L28"/>
    <property type="match status" value="1"/>
</dbReference>
<dbReference type="SUPFAM" id="SSF143800">
    <property type="entry name" value="L28p-like"/>
    <property type="match status" value="1"/>
</dbReference>
<feature type="chain" id="PRO_0000178481" description="Large ribosomal subunit protein bL28">
    <location>
        <begin position="1"/>
        <end position="62"/>
    </location>
</feature>
<protein>
    <recommendedName>
        <fullName evidence="1">Large ribosomal subunit protein bL28</fullName>
    </recommendedName>
    <alternativeName>
        <fullName evidence="2">50S ribosomal protein L28</fullName>
    </alternativeName>
</protein>
<gene>
    <name evidence="1" type="primary">rpmB</name>
    <name type="ordered locus">HH_1289</name>
</gene>
<organism>
    <name type="scientific">Helicobacter hepaticus (strain ATCC 51449 / 3B1)</name>
    <dbReference type="NCBI Taxonomy" id="235279"/>
    <lineage>
        <taxon>Bacteria</taxon>
        <taxon>Pseudomonadati</taxon>
        <taxon>Campylobacterota</taxon>
        <taxon>Epsilonproteobacteria</taxon>
        <taxon>Campylobacterales</taxon>
        <taxon>Helicobacteraceae</taxon>
        <taxon>Helicobacter</taxon>
    </lineage>
</organism>
<name>RL28_HELHP</name>
<keyword id="KW-1185">Reference proteome</keyword>
<keyword id="KW-0687">Ribonucleoprotein</keyword>
<keyword id="KW-0689">Ribosomal protein</keyword>
<proteinExistence type="inferred from homology"/>
<sequence>MARKCFFTGKGPMVGNNVSHANNKTKKRSLPNLRSIRLKLEDGTSVRVKVAASTLRTIKKYS</sequence>
<accession>Q7VGN1</accession>
<comment type="similarity">
    <text evidence="1">Belongs to the bacterial ribosomal protein bL28 family.</text>
</comment>